<name>ERA_CAMHC</name>
<proteinExistence type="inferred from homology"/>
<protein>
    <recommendedName>
        <fullName evidence="1">GTPase Era</fullName>
    </recommendedName>
</protein>
<comment type="function">
    <text evidence="1">An essential GTPase that binds both GDP and GTP, with rapid nucleotide exchange. Plays a role in 16S rRNA processing and 30S ribosomal subunit biogenesis and possibly also in cell cycle regulation and energy metabolism.</text>
</comment>
<comment type="subunit">
    <text evidence="1">Monomer.</text>
</comment>
<comment type="subcellular location">
    <subcellularLocation>
        <location>Cytoplasm</location>
    </subcellularLocation>
    <subcellularLocation>
        <location evidence="1">Cell inner membrane</location>
        <topology evidence="1">Peripheral membrane protein</topology>
    </subcellularLocation>
</comment>
<comment type="similarity">
    <text evidence="1 2">Belongs to the TRAFAC class TrmE-Era-EngA-EngB-Septin-like GTPase superfamily. Era GTPase family.</text>
</comment>
<feature type="chain" id="PRO_1000079665" description="GTPase Era">
    <location>
        <begin position="1"/>
        <end position="289"/>
    </location>
</feature>
<feature type="domain" description="Era-type G" evidence="2">
    <location>
        <begin position="2"/>
        <end position="167"/>
    </location>
</feature>
<feature type="domain" description="KH type-2" evidence="1">
    <location>
        <begin position="186"/>
        <end position="274"/>
    </location>
</feature>
<feature type="region of interest" description="G1" evidence="2">
    <location>
        <begin position="10"/>
        <end position="17"/>
    </location>
</feature>
<feature type="region of interest" description="G2" evidence="2">
    <location>
        <begin position="36"/>
        <end position="40"/>
    </location>
</feature>
<feature type="region of interest" description="G3" evidence="2">
    <location>
        <begin position="57"/>
        <end position="60"/>
    </location>
</feature>
<feature type="region of interest" description="G4" evidence="2">
    <location>
        <begin position="116"/>
        <end position="119"/>
    </location>
</feature>
<feature type="region of interest" description="G5" evidence="2">
    <location>
        <begin position="146"/>
        <end position="148"/>
    </location>
</feature>
<feature type="binding site" evidence="1">
    <location>
        <begin position="10"/>
        <end position="17"/>
    </location>
    <ligand>
        <name>GTP</name>
        <dbReference type="ChEBI" id="CHEBI:37565"/>
    </ligand>
</feature>
<feature type="binding site" evidence="1">
    <location>
        <begin position="57"/>
        <end position="61"/>
    </location>
    <ligand>
        <name>GTP</name>
        <dbReference type="ChEBI" id="CHEBI:37565"/>
    </ligand>
</feature>
<feature type="binding site" evidence="1">
    <location>
        <begin position="116"/>
        <end position="119"/>
    </location>
    <ligand>
        <name>GTP</name>
        <dbReference type="ChEBI" id="CHEBI:37565"/>
    </ligand>
</feature>
<dbReference type="EMBL" id="CP000776">
    <property type="protein sequence ID" value="ABS51639.1"/>
    <property type="molecule type" value="Genomic_DNA"/>
</dbReference>
<dbReference type="RefSeq" id="WP_012108916.1">
    <property type="nucleotide sequence ID" value="NC_009714.1"/>
</dbReference>
<dbReference type="SMR" id="A7I277"/>
<dbReference type="STRING" id="360107.CHAB381_1060"/>
<dbReference type="KEGG" id="cha:CHAB381_1060"/>
<dbReference type="eggNOG" id="COG1159">
    <property type="taxonomic scope" value="Bacteria"/>
</dbReference>
<dbReference type="HOGENOM" id="CLU_038009_1_0_7"/>
<dbReference type="OrthoDB" id="9805918at2"/>
<dbReference type="Proteomes" id="UP000002407">
    <property type="component" value="Chromosome"/>
</dbReference>
<dbReference type="GO" id="GO:0005829">
    <property type="term" value="C:cytosol"/>
    <property type="evidence" value="ECO:0007669"/>
    <property type="project" value="TreeGrafter"/>
</dbReference>
<dbReference type="GO" id="GO:0005886">
    <property type="term" value="C:plasma membrane"/>
    <property type="evidence" value="ECO:0007669"/>
    <property type="project" value="UniProtKB-SubCell"/>
</dbReference>
<dbReference type="GO" id="GO:0005525">
    <property type="term" value="F:GTP binding"/>
    <property type="evidence" value="ECO:0007669"/>
    <property type="project" value="UniProtKB-UniRule"/>
</dbReference>
<dbReference type="GO" id="GO:0003924">
    <property type="term" value="F:GTPase activity"/>
    <property type="evidence" value="ECO:0007669"/>
    <property type="project" value="UniProtKB-UniRule"/>
</dbReference>
<dbReference type="GO" id="GO:0043024">
    <property type="term" value="F:ribosomal small subunit binding"/>
    <property type="evidence" value="ECO:0007669"/>
    <property type="project" value="TreeGrafter"/>
</dbReference>
<dbReference type="GO" id="GO:0070181">
    <property type="term" value="F:small ribosomal subunit rRNA binding"/>
    <property type="evidence" value="ECO:0007669"/>
    <property type="project" value="UniProtKB-UniRule"/>
</dbReference>
<dbReference type="GO" id="GO:0000028">
    <property type="term" value="P:ribosomal small subunit assembly"/>
    <property type="evidence" value="ECO:0007669"/>
    <property type="project" value="TreeGrafter"/>
</dbReference>
<dbReference type="CDD" id="cd04163">
    <property type="entry name" value="Era"/>
    <property type="match status" value="1"/>
</dbReference>
<dbReference type="CDD" id="cd22534">
    <property type="entry name" value="KH-II_Era"/>
    <property type="match status" value="1"/>
</dbReference>
<dbReference type="Gene3D" id="3.30.300.20">
    <property type="match status" value="1"/>
</dbReference>
<dbReference type="Gene3D" id="3.40.50.300">
    <property type="entry name" value="P-loop containing nucleotide triphosphate hydrolases"/>
    <property type="match status" value="1"/>
</dbReference>
<dbReference type="HAMAP" id="MF_00367">
    <property type="entry name" value="GTPase_Era"/>
    <property type="match status" value="1"/>
</dbReference>
<dbReference type="InterPro" id="IPR030388">
    <property type="entry name" value="G_ERA_dom"/>
</dbReference>
<dbReference type="InterPro" id="IPR006073">
    <property type="entry name" value="GTP-bd"/>
</dbReference>
<dbReference type="InterPro" id="IPR005662">
    <property type="entry name" value="GTPase_Era-like"/>
</dbReference>
<dbReference type="InterPro" id="IPR015946">
    <property type="entry name" value="KH_dom-like_a/b"/>
</dbReference>
<dbReference type="InterPro" id="IPR004044">
    <property type="entry name" value="KH_dom_type_2"/>
</dbReference>
<dbReference type="InterPro" id="IPR009019">
    <property type="entry name" value="KH_sf_prok-type"/>
</dbReference>
<dbReference type="InterPro" id="IPR027417">
    <property type="entry name" value="P-loop_NTPase"/>
</dbReference>
<dbReference type="InterPro" id="IPR005225">
    <property type="entry name" value="Small_GTP-bd"/>
</dbReference>
<dbReference type="NCBIfam" id="TIGR00436">
    <property type="entry name" value="era"/>
    <property type="match status" value="1"/>
</dbReference>
<dbReference type="NCBIfam" id="NF000908">
    <property type="entry name" value="PRK00089.1"/>
    <property type="match status" value="1"/>
</dbReference>
<dbReference type="NCBIfam" id="TIGR00231">
    <property type="entry name" value="small_GTP"/>
    <property type="match status" value="1"/>
</dbReference>
<dbReference type="PANTHER" id="PTHR42698">
    <property type="entry name" value="GTPASE ERA"/>
    <property type="match status" value="1"/>
</dbReference>
<dbReference type="PANTHER" id="PTHR42698:SF1">
    <property type="entry name" value="GTPASE ERA, MITOCHONDRIAL"/>
    <property type="match status" value="1"/>
</dbReference>
<dbReference type="Pfam" id="PF07650">
    <property type="entry name" value="KH_2"/>
    <property type="match status" value="1"/>
</dbReference>
<dbReference type="Pfam" id="PF01926">
    <property type="entry name" value="MMR_HSR1"/>
    <property type="match status" value="1"/>
</dbReference>
<dbReference type="SUPFAM" id="SSF52540">
    <property type="entry name" value="P-loop containing nucleoside triphosphate hydrolases"/>
    <property type="match status" value="1"/>
</dbReference>
<dbReference type="SUPFAM" id="SSF54814">
    <property type="entry name" value="Prokaryotic type KH domain (KH-domain type II)"/>
    <property type="match status" value="1"/>
</dbReference>
<dbReference type="PROSITE" id="PS51713">
    <property type="entry name" value="G_ERA"/>
    <property type="match status" value="1"/>
</dbReference>
<dbReference type="PROSITE" id="PS50823">
    <property type="entry name" value="KH_TYPE_2"/>
    <property type="match status" value="1"/>
</dbReference>
<gene>
    <name evidence="1" type="primary">era</name>
    <name type="ordered locus">CHAB381_1060</name>
</gene>
<accession>A7I277</accession>
<keyword id="KW-0997">Cell inner membrane</keyword>
<keyword id="KW-1003">Cell membrane</keyword>
<keyword id="KW-0963">Cytoplasm</keyword>
<keyword id="KW-0342">GTP-binding</keyword>
<keyword id="KW-0472">Membrane</keyword>
<keyword id="KW-0547">Nucleotide-binding</keyword>
<keyword id="KW-1185">Reference proteome</keyword>
<keyword id="KW-0690">Ribosome biogenesis</keyword>
<keyword id="KW-0694">RNA-binding</keyword>
<keyword id="KW-0699">rRNA-binding</keyword>
<reference key="1">
    <citation type="submission" date="2007-07" db="EMBL/GenBank/DDBJ databases">
        <title>Complete genome sequence of Campylobacter hominis ATCC BAA-381, a commensal isolated from the human gastrointestinal tract.</title>
        <authorList>
            <person name="Fouts D.E."/>
            <person name="Mongodin E.F."/>
            <person name="Puiu D."/>
            <person name="Sebastian Y."/>
            <person name="Miller W.G."/>
            <person name="Mandrell R.E."/>
            <person name="Nelson K.E."/>
        </authorList>
    </citation>
    <scope>NUCLEOTIDE SEQUENCE [LARGE SCALE GENOMIC DNA]</scope>
    <source>
        <strain>ATCC BAA-381 / DSM 21671 / CCUG 45161 / LMG 19568 / NCTC 13146 / CH001A</strain>
    </source>
</reference>
<organism>
    <name type="scientific">Campylobacter hominis (strain ATCC BAA-381 / DSM 21671 / CCUG 45161 / LMG 19568 / NCTC 13146 / CH001A)</name>
    <dbReference type="NCBI Taxonomy" id="360107"/>
    <lineage>
        <taxon>Bacteria</taxon>
        <taxon>Pseudomonadati</taxon>
        <taxon>Campylobacterota</taxon>
        <taxon>Epsilonproteobacteria</taxon>
        <taxon>Campylobacterales</taxon>
        <taxon>Campylobacteraceae</taxon>
        <taxon>Campylobacter</taxon>
    </lineage>
</organism>
<evidence type="ECO:0000255" key="1">
    <source>
        <dbReference type="HAMAP-Rule" id="MF_00367"/>
    </source>
</evidence>
<evidence type="ECO:0000255" key="2">
    <source>
        <dbReference type="PROSITE-ProRule" id="PRU01050"/>
    </source>
</evidence>
<sequence>MKSGFVSLIGRTNAGKSSLLNFLVGERLAMVSHKINATRRKINGIAMFGEDQIIFIDTPGLHKSEKIMNKLMIDVAIKSIGDADLVLFLASIHDDTRDYEEFLKIAKRPPHILILTKTDETDDGKIAKKLGEYAKFCKEFCAIIPVNIKKKVYRAEILREIAKLLPEHEYFFDPQIISNTNLRDIYRDFILESVYESVSSEIPYNSDVLIEKITEKEQITKISAKIITDTNSHKQILIGKGGETIKRIGIKSRKRISDFSKVKIHLNLQIFVKKGWKNDENLVKSVFVY</sequence>